<reference key="1">
    <citation type="submission" date="2006-01" db="EMBL/GenBank/DDBJ databases">
        <authorList>
            <consortium name="NIH - Mammalian Gene Collection (MGC) project"/>
        </authorList>
    </citation>
    <scope>NUCLEOTIDE SEQUENCE [LARGE SCALE MRNA]</scope>
    <source>
        <strain>Hereford</strain>
        <tissue>Heart ventricle</tissue>
    </source>
</reference>
<accession>Q2KI11</accession>
<sequence>MPAFNRLFPLASLLLILWVGVCFPVCVEVPSETEAVQGNPMKLRCISCMKREEVEATTVVEWFYRPEGGKDFLIYEYRNGHQEVESPFQGRLQWNGSKDLQDVSITVLNVTLNDSGLYTCNVSREFEFEAHRPFVKTTRLIPLRVTEEAGEDFTSVVSEIMMYILLVFLTLWLLIEMIYCYRKVSKAEEAAQENASDYLAIPSENKENSAVPVEE</sequence>
<organism>
    <name type="scientific">Bos taurus</name>
    <name type="common">Bovine</name>
    <dbReference type="NCBI Taxonomy" id="9913"/>
    <lineage>
        <taxon>Eukaryota</taxon>
        <taxon>Metazoa</taxon>
        <taxon>Chordata</taxon>
        <taxon>Craniata</taxon>
        <taxon>Vertebrata</taxon>
        <taxon>Euteleostomi</taxon>
        <taxon>Mammalia</taxon>
        <taxon>Eutheria</taxon>
        <taxon>Laurasiatheria</taxon>
        <taxon>Artiodactyla</taxon>
        <taxon>Ruminantia</taxon>
        <taxon>Pecora</taxon>
        <taxon>Bovidae</taxon>
        <taxon>Bovinae</taxon>
        <taxon>Bos</taxon>
    </lineage>
</organism>
<name>SCN3B_BOVIN</name>
<keyword id="KW-1003">Cell membrane</keyword>
<keyword id="KW-1015">Disulfide bond</keyword>
<keyword id="KW-0325">Glycoprotein</keyword>
<keyword id="KW-0393">Immunoglobulin domain</keyword>
<keyword id="KW-0407">Ion channel</keyword>
<keyword id="KW-0406">Ion transport</keyword>
<keyword id="KW-0472">Membrane</keyword>
<keyword id="KW-1185">Reference proteome</keyword>
<keyword id="KW-0732">Signal</keyword>
<keyword id="KW-0915">Sodium</keyword>
<keyword id="KW-0894">Sodium channel</keyword>
<keyword id="KW-0739">Sodium transport</keyword>
<keyword id="KW-0812">Transmembrane</keyword>
<keyword id="KW-1133">Transmembrane helix</keyword>
<keyword id="KW-0813">Transport</keyword>
<keyword id="KW-0851">Voltage-gated channel</keyword>
<dbReference type="EMBL" id="BC112810">
    <property type="protein sequence ID" value="AAI12811.1"/>
    <property type="molecule type" value="mRNA"/>
</dbReference>
<dbReference type="RefSeq" id="NP_001039960.1">
    <property type="nucleotide sequence ID" value="NM_001046495.1"/>
</dbReference>
<dbReference type="SMR" id="Q2KI11"/>
<dbReference type="FunCoup" id="Q2KI11">
    <property type="interactions" value="802"/>
</dbReference>
<dbReference type="STRING" id="9913.ENSBTAP00000066197"/>
<dbReference type="BindingDB" id="Q2KI11"/>
<dbReference type="GlyCosmos" id="Q2KI11">
    <property type="glycosylation" value="4 sites, No reported glycans"/>
</dbReference>
<dbReference type="GlyGen" id="Q2KI11">
    <property type="glycosylation" value="4 sites"/>
</dbReference>
<dbReference type="PaxDb" id="9913-ENSBTAP00000022302"/>
<dbReference type="Ensembl" id="ENSBTAT00000022302.7">
    <property type="protein sequence ID" value="ENSBTAP00000022302.5"/>
    <property type="gene ID" value="ENSBTAG00000016768.7"/>
</dbReference>
<dbReference type="GeneID" id="540925"/>
<dbReference type="KEGG" id="bta:540925"/>
<dbReference type="CTD" id="55800"/>
<dbReference type="VEuPathDB" id="HostDB:ENSBTAG00000016768"/>
<dbReference type="VGNC" id="VGNC:34349">
    <property type="gene designation" value="SCN3B"/>
</dbReference>
<dbReference type="eggNOG" id="ENOG502QWH0">
    <property type="taxonomic scope" value="Eukaryota"/>
</dbReference>
<dbReference type="GeneTree" id="ENSGT00390000018560"/>
<dbReference type="HOGENOM" id="CLU_096296_1_0_1"/>
<dbReference type="InParanoid" id="Q2KI11"/>
<dbReference type="OMA" id="QGSHMKL"/>
<dbReference type="OrthoDB" id="9440529at2759"/>
<dbReference type="TreeFam" id="TF332097"/>
<dbReference type="Reactome" id="R-BTA-5576892">
    <property type="pathway name" value="Phase 0 - rapid depolarisation"/>
</dbReference>
<dbReference type="Proteomes" id="UP000009136">
    <property type="component" value="Chromosome 15"/>
</dbReference>
<dbReference type="Bgee" id="ENSBTAG00000016768">
    <property type="expression patterns" value="Expressed in cardiac ventricle and 69 other cell types or tissues"/>
</dbReference>
<dbReference type="GO" id="GO:0005829">
    <property type="term" value="C:cytosol"/>
    <property type="evidence" value="ECO:0007669"/>
    <property type="project" value="Ensembl"/>
</dbReference>
<dbReference type="GO" id="GO:0043231">
    <property type="term" value="C:intracellular membrane-bounded organelle"/>
    <property type="evidence" value="ECO:0007669"/>
    <property type="project" value="Ensembl"/>
</dbReference>
<dbReference type="GO" id="GO:0005886">
    <property type="term" value="C:plasma membrane"/>
    <property type="evidence" value="ECO:0000250"/>
    <property type="project" value="UniProtKB"/>
</dbReference>
<dbReference type="GO" id="GO:0001518">
    <property type="term" value="C:voltage-gated sodium channel complex"/>
    <property type="evidence" value="ECO:0000250"/>
    <property type="project" value="UniProtKB"/>
</dbReference>
<dbReference type="GO" id="GO:0030018">
    <property type="term" value="C:Z disc"/>
    <property type="evidence" value="ECO:0007669"/>
    <property type="project" value="Ensembl"/>
</dbReference>
<dbReference type="GO" id="GO:0019871">
    <property type="term" value="F:sodium channel inhibitor activity"/>
    <property type="evidence" value="ECO:0000318"/>
    <property type="project" value="GO_Central"/>
</dbReference>
<dbReference type="GO" id="GO:0017080">
    <property type="term" value="F:sodium channel regulator activity"/>
    <property type="evidence" value="ECO:0000250"/>
    <property type="project" value="UniProtKB"/>
</dbReference>
<dbReference type="GO" id="GO:0044325">
    <property type="term" value="F:transmembrane transporter binding"/>
    <property type="evidence" value="ECO:0000318"/>
    <property type="project" value="GO_Central"/>
</dbReference>
<dbReference type="GO" id="GO:0086006">
    <property type="term" value="F:voltage-gated sodium channel activity involved in cardiac muscle cell action potential"/>
    <property type="evidence" value="ECO:0007669"/>
    <property type="project" value="Ensembl"/>
</dbReference>
<dbReference type="GO" id="GO:0086014">
    <property type="term" value="P:atrial cardiac muscle cell action potential"/>
    <property type="evidence" value="ECO:0007669"/>
    <property type="project" value="Ensembl"/>
</dbReference>
<dbReference type="GO" id="GO:0086012">
    <property type="term" value="P:membrane depolarization during cardiac muscle cell action potential"/>
    <property type="evidence" value="ECO:0000318"/>
    <property type="project" value="GO_Central"/>
</dbReference>
<dbReference type="GO" id="GO:0010460">
    <property type="term" value="P:positive regulation of heart rate"/>
    <property type="evidence" value="ECO:0007669"/>
    <property type="project" value="Ensembl"/>
</dbReference>
<dbReference type="GO" id="GO:0010765">
    <property type="term" value="P:positive regulation of sodium ion transport"/>
    <property type="evidence" value="ECO:0007669"/>
    <property type="project" value="Ensembl"/>
</dbReference>
<dbReference type="GO" id="GO:0072659">
    <property type="term" value="P:protein localization to plasma membrane"/>
    <property type="evidence" value="ECO:0007669"/>
    <property type="project" value="Ensembl"/>
</dbReference>
<dbReference type="GO" id="GO:0060371">
    <property type="term" value="P:regulation of atrial cardiac muscle cell membrane depolarization"/>
    <property type="evidence" value="ECO:0007669"/>
    <property type="project" value="Ensembl"/>
</dbReference>
<dbReference type="GO" id="GO:0086091">
    <property type="term" value="P:regulation of heart rate by cardiac conduction"/>
    <property type="evidence" value="ECO:0000318"/>
    <property type="project" value="GO_Central"/>
</dbReference>
<dbReference type="GO" id="GO:0060373">
    <property type="term" value="P:regulation of ventricular cardiac muscle cell membrane depolarization"/>
    <property type="evidence" value="ECO:0007669"/>
    <property type="project" value="Ensembl"/>
</dbReference>
<dbReference type="GO" id="GO:0086015">
    <property type="term" value="P:SA node cell action potential"/>
    <property type="evidence" value="ECO:0007669"/>
    <property type="project" value="Ensembl"/>
</dbReference>
<dbReference type="GO" id="GO:0035725">
    <property type="term" value="P:sodium ion transmembrane transport"/>
    <property type="evidence" value="ECO:0000318"/>
    <property type="project" value="GO_Central"/>
</dbReference>
<dbReference type="GO" id="GO:0086005">
    <property type="term" value="P:ventricular cardiac muscle cell action potential"/>
    <property type="evidence" value="ECO:0000318"/>
    <property type="project" value="GO_Central"/>
</dbReference>
<dbReference type="FunFam" id="2.60.40.10:FF:000375">
    <property type="entry name" value="Sodium channel beta 1 subunit"/>
    <property type="match status" value="1"/>
</dbReference>
<dbReference type="Gene3D" id="2.60.40.10">
    <property type="entry name" value="Immunoglobulins"/>
    <property type="match status" value="1"/>
</dbReference>
<dbReference type="InterPro" id="IPR007110">
    <property type="entry name" value="Ig-like_dom"/>
</dbReference>
<dbReference type="InterPro" id="IPR036179">
    <property type="entry name" value="Ig-like_dom_sf"/>
</dbReference>
<dbReference type="InterPro" id="IPR013783">
    <property type="entry name" value="Ig-like_fold"/>
</dbReference>
<dbReference type="InterPro" id="IPR003599">
    <property type="entry name" value="Ig_sub"/>
</dbReference>
<dbReference type="InterPro" id="IPR013106">
    <property type="entry name" value="Ig_V-set"/>
</dbReference>
<dbReference type="InterPro" id="IPR027098">
    <property type="entry name" value="Na_channel_b1/b3"/>
</dbReference>
<dbReference type="PANTHER" id="PTHR10546">
    <property type="entry name" value="SODIUM CHANNEL SUBUNIT BETA-1 AND 3"/>
    <property type="match status" value="1"/>
</dbReference>
<dbReference type="PANTHER" id="PTHR10546:SF1">
    <property type="entry name" value="SODIUM CHANNEL SUBUNIT BETA-3"/>
    <property type="match status" value="1"/>
</dbReference>
<dbReference type="Pfam" id="PF07686">
    <property type="entry name" value="V-set"/>
    <property type="match status" value="1"/>
</dbReference>
<dbReference type="SMART" id="SM00409">
    <property type="entry name" value="IG"/>
    <property type="match status" value="1"/>
</dbReference>
<dbReference type="SUPFAM" id="SSF48726">
    <property type="entry name" value="Immunoglobulin"/>
    <property type="match status" value="1"/>
</dbReference>
<dbReference type="PROSITE" id="PS50835">
    <property type="entry name" value="IG_LIKE"/>
    <property type="match status" value="1"/>
</dbReference>
<comment type="function">
    <text evidence="1 2">Regulatory subunit of multiple voltage-gated sodium (Nav) channels directly mediating the depolarization of excitable membranes. Navs, also called VGSCs (voltage-gated sodium channels) or VDSCs (voltage-dependent sodium channels), operate by switching between closed and open conformations depending on the voltage difference across the membrane. In the open conformation they allow Na(+) ions to selectively pass through the pore, along their electrochemical gradient. The influx of Na+ ions provokes membrane depolarization, initiating the propagation of electrical signals throughout cells and tissues. The accessory beta subunits participate in localization and functional modulation of the Nav channels (By similarity). Modulates the activity of SCN2A/Nav1.2, causing a hyperpolarizing shift in the voltage-dependence of inactivation of the channel and increasing the fraction of channels operating in the fast gating mode (By similarity). Modulates the activity of SCN5A/Nav1.5. Could also regulate the atypical sodium channel SCN7A/Nav2.1. Modulates the activity of SCN10A/Nav1.8, regulating its oligomerization and accelerating the recovery from inactivation (By similarity).</text>
</comment>
<comment type="subunit">
    <text evidence="1 2">A voltage-gated sodium (Nav) channel consists of an ion-conducting pore-forming alpha subunit functional on its own that is regulated by one or more beta subunits. Forms homodimers and homotrimers. SCN3B is non-covalently associated with alpha subunits and induces the formation of alpha subunit oligomers, including trimers. Interacts with SCN5A/Nav1.5; regulatory subunit of SCN5A/Nav1.5. Interacts with SCN7A/Nav2.1; probable regulatory subunit of SCN7A/Nav2.1 (By similarity). Interacts with SCN10A; regulatory subunit of SCN10A/Nav1.8. Interacts with NFASC; probably involved in targeting the sodium channels to the nodes of Ranvier (By similarity).</text>
</comment>
<comment type="subcellular location">
    <subcellularLocation>
        <location evidence="2">Cell membrane</location>
        <topology evidence="2">Single-pass type I membrane protein</topology>
    </subcellularLocation>
</comment>
<comment type="PTM">
    <text evidence="2">Intramolecular disulfide bonds favor the voltage-gated sodium channel oligomeric complex assembly.</text>
</comment>
<comment type="PTM">
    <text evidence="2">N-glycosylated.</text>
</comment>
<comment type="similarity">
    <text evidence="5">Belongs to the sodium channel auxiliary subunit SCN3B (TC 8.A.17) family.</text>
</comment>
<proteinExistence type="evidence at transcript level"/>
<feature type="signal peptide" evidence="3">
    <location>
        <begin position="1"/>
        <end position="22"/>
    </location>
</feature>
<feature type="chain" id="PRO_0000254013" description="Sodium channel regulatory subunit beta-3">
    <location>
        <begin position="23"/>
        <end position="215"/>
    </location>
</feature>
<feature type="topological domain" description="Extracellular" evidence="5">
    <location>
        <begin position="23"/>
        <end position="156"/>
    </location>
</feature>
<feature type="transmembrane region" description="Helical" evidence="2">
    <location>
        <begin position="157"/>
        <end position="178"/>
    </location>
</feature>
<feature type="topological domain" description="Cytoplasmic" evidence="5">
    <location>
        <begin position="179"/>
        <end position="215"/>
    </location>
</feature>
<feature type="domain" description="Ig-like C2-type" evidence="3">
    <location>
        <begin position="32"/>
        <end position="154"/>
    </location>
</feature>
<feature type="glycosylation site" description="N-linked (GlcNAc...) asparagine" evidence="3">
    <location>
        <position position="95"/>
    </location>
</feature>
<feature type="glycosylation site" description="N-linked (GlcNAc...) asparagine" evidence="3">
    <location>
        <position position="109"/>
    </location>
</feature>
<feature type="glycosylation site" description="N-linked (GlcNAc...) asparagine" evidence="3">
    <location>
        <position position="113"/>
    </location>
</feature>
<feature type="glycosylation site" description="N-linked (GlcNAc...) asparagine" evidence="3">
    <location>
        <position position="121"/>
    </location>
</feature>
<feature type="disulfide bond" evidence="2 4">
    <location>
        <begin position="26"/>
        <end position="48"/>
    </location>
</feature>
<feature type="disulfide bond" evidence="2 4">
    <location>
        <begin position="45"/>
        <end position="120"/>
    </location>
</feature>
<evidence type="ECO:0000250" key="1">
    <source>
        <dbReference type="UniProtKB" id="Q9JK00"/>
    </source>
</evidence>
<evidence type="ECO:0000250" key="2">
    <source>
        <dbReference type="UniProtKB" id="Q9NY72"/>
    </source>
</evidence>
<evidence type="ECO:0000255" key="3"/>
<evidence type="ECO:0000255" key="4">
    <source>
        <dbReference type="PROSITE-ProRule" id="PRU00114"/>
    </source>
</evidence>
<evidence type="ECO:0000305" key="5"/>
<protein>
    <recommendedName>
        <fullName evidence="5">Sodium channel regulatory subunit beta-3</fullName>
    </recommendedName>
</protein>
<gene>
    <name evidence="2" type="primary">SCN3B</name>
</gene>